<protein>
    <recommendedName>
        <fullName>Oxaloacetate decarboxylase beta chain 2</fullName>
        <ecNumber>7.2.4.2</ecNumber>
    </recommendedName>
</protein>
<accession>Q03031</accession>
<evidence type="ECO:0000255" key="1"/>
<evidence type="ECO:0000305" key="2"/>
<organism>
    <name type="scientific">Salmonella typhimurium (strain LT2 / SGSC1412 / ATCC 700720)</name>
    <dbReference type="NCBI Taxonomy" id="99287"/>
    <lineage>
        <taxon>Bacteria</taxon>
        <taxon>Pseudomonadati</taxon>
        <taxon>Pseudomonadota</taxon>
        <taxon>Gammaproteobacteria</taxon>
        <taxon>Enterobacterales</taxon>
        <taxon>Enterobacteriaceae</taxon>
        <taxon>Salmonella</taxon>
    </lineage>
</organism>
<name>OADB2_SALTY</name>
<comment type="function">
    <text>Catalyzes the decarboxylation of oxaloacetate coupled to Na(+) translocation.</text>
</comment>
<comment type="catalytic activity">
    <reaction>
        <text>oxaloacetate + 2 Na(+)(in) + H(+) = pyruvate + 2 Na(+)(out) + CO2</text>
        <dbReference type="Rhea" id="RHEA:57724"/>
        <dbReference type="ChEBI" id="CHEBI:15361"/>
        <dbReference type="ChEBI" id="CHEBI:15378"/>
        <dbReference type="ChEBI" id="CHEBI:16452"/>
        <dbReference type="ChEBI" id="CHEBI:16526"/>
        <dbReference type="ChEBI" id="CHEBI:29101"/>
        <dbReference type="EC" id="7.2.4.2"/>
    </reaction>
</comment>
<comment type="cofactor">
    <cofactor>
        <name>Na(+)</name>
        <dbReference type="ChEBI" id="CHEBI:29101"/>
    </cofactor>
</comment>
<comment type="subunit">
    <text>Heterotrimer of an alpha, a beta and a gamma subunit.</text>
</comment>
<comment type="subcellular location">
    <subcellularLocation>
        <location>Cell membrane</location>
        <topology>Multi-pass membrane protein</topology>
    </subcellularLocation>
</comment>
<comment type="similarity">
    <text evidence="2">Belongs to the GcdB/MmdB/OadB family.</text>
</comment>
<dbReference type="EC" id="7.2.4.2"/>
<dbReference type="EMBL" id="M96434">
    <property type="protein sequence ID" value="AAA02974.1"/>
    <property type="molecule type" value="Unassigned_DNA"/>
</dbReference>
<dbReference type="EMBL" id="AE006468">
    <property type="protein sequence ID" value="AAL22220.1"/>
    <property type="molecule type" value="Genomic_DNA"/>
</dbReference>
<dbReference type="PIR" id="C44465">
    <property type="entry name" value="C44465"/>
</dbReference>
<dbReference type="RefSeq" id="NP_462261.1">
    <property type="nucleotide sequence ID" value="NC_003197.2"/>
</dbReference>
<dbReference type="RefSeq" id="WP_000444803.1">
    <property type="nucleotide sequence ID" value="NC_003197.2"/>
</dbReference>
<dbReference type="SMR" id="Q03031"/>
<dbReference type="STRING" id="99287.STM3351"/>
<dbReference type="TCDB" id="3.B.1.1.1">
    <property type="family name" value="the na(+)-transporting carboxylic acid decarboxylase (nat-dc) family"/>
</dbReference>
<dbReference type="PaxDb" id="99287-STM3351"/>
<dbReference type="GeneID" id="1254874"/>
<dbReference type="KEGG" id="stm:STM3351"/>
<dbReference type="PATRIC" id="fig|99287.12.peg.3552"/>
<dbReference type="HOGENOM" id="CLU_036168_0_0_6"/>
<dbReference type="PhylomeDB" id="Q03031"/>
<dbReference type="BioCyc" id="SENT99287:STM3351-MONOMER"/>
<dbReference type="Proteomes" id="UP000001014">
    <property type="component" value="Chromosome"/>
</dbReference>
<dbReference type="GO" id="GO:0005886">
    <property type="term" value="C:plasma membrane"/>
    <property type="evidence" value="ECO:0007669"/>
    <property type="project" value="UniProtKB-SubCell"/>
</dbReference>
<dbReference type="GO" id="GO:0015451">
    <property type="term" value="F:decarboxylation-driven active transmembrane transporter activity"/>
    <property type="evidence" value="ECO:0007669"/>
    <property type="project" value="UniProtKB-EC"/>
</dbReference>
<dbReference type="GO" id="GO:0016829">
    <property type="term" value="F:lyase activity"/>
    <property type="evidence" value="ECO:0007669"/>
    <property type="project" value="InterPro"/>
</dbReference>
<dbReference type="GO" id="GO:0006814">
    <property type="term" value="P:sodium ion transport"/>
    <property type="evidence" value="ECO:0007669"/>
    <property type="project" value="UniProtKB-KW"/>
</dbReference>
<dbReference type="InterPro" id="IPR005661">
    <property type="entry name" value="OadB_MmdB"/>
</dbReference>
<dbReference type="NCBIfam" id="TIGR01109">
    <property type="entry name" value="Na_pump_decarbB"/>
    <property type="match status" value="1"/>
</dbReference>
<dbReference type="NCBIfam" id="NF012019">
    <property type="entry name" value="PRK15475.1"/>
    <property type="match status" value="1"/>
</dbReference>
<dbReference type="NCBIfam" id="NF012020">
    <property type="entry name" value="PRK15476.1"/>
    <property type="match status" value="1"/>
</dbReference>
<dbReference type="NCBIfam" id="NF012021">
    <property type="entry name" value="PRK15477.1"/>
    <property type="match status" value="1"/>
</dbReference>
<dbReference type="PANTHER" id="PTHR35806">
    <property type="entry name" value="OXALOACETATE DECARBOXYLASE BETA CHAIN 2"/>
    <property type="match status" value="1"/>
</dbReference>
<dbReference type="PANTHER" id="PTHR35806:SF1">
    <property type="entry name" value="OXALOACETATE DECARBOXYLASE BETA CHAIN 2"/>
    <property type="match status" value="1"/>
</dbReference>
<dbReference type="Pfam" id="PF03977">
    <property type="entry name" value="OAD_beta"/>
    <property type="match status" value="1"/>
</dbReference>
<dbReference type="PIRSF" id="PIRSF015658">
    <property type="entry name" value="MmdB_OadB"/>
    <property type="match status" value="1"/>
</dbReference>
<reference key="1">
    <citation type="journal article" date="1992" name="J. Biol. Chem.">
        <title>Sequence of the sodium ion pump oxaloacetate decarboxylase from Salmonella typhimurium.</title>
        <authorList>
            <person name="Woehlke G."/>
            <person name="Wifling K."/>
            <person name="Dimroth P."/>
        </authorList>
    </citation>
    <scope>NUCLEOTIDE SEQUENCE [GENOMIC DNA]</scope>
    <source>
        <strain>LT2</strain>
    </source>
</reference>
<reference key="2">
    <citation type="journal article" date="2001" name="Nature">
        <title>Complete genome sequence of Salmonella enterica serovar Typhimurium LT2.</title>
        <authorList>
            <person name="McClelland M."/>
            <person name="Sanderson K.E."/>
            <person name="Spieth J."/>
            <person name="Clifton S.W."/>
            <person name="Latreille P."/>
            <person name="Courtney L."/>
            <person name="Porwollik S."/>
            <person name="Ali J."/>
            <person name="Dante M."/>
            <person name="Du F."/>
            <person name="Hou S."/>
            <person name="Layman D."/>
            <person name="Leonard S."/>
            <person name="Nguyen C."/>
            <person name="Scott K."/>
            <person name="Holmes A."/>
            <person name="Grewal N."/>
            <person name="Mulvaney E."/>
            <person name="Ryan E."/>
            <person name="Sun H."/>
            <person name="Florea L."/>
            <person name="Miller W."/>
            <person name="Stoneking T."/>
            <person name="Nhan M."/>
            <person name="Waterston R."/>
            <person name="Wilson R.K."/>
        </authorList>
    </citation>
    <scope>NUCLEOTIDE SEQUENCE [LARGE SCALE GENOMIC DNA]</scope>
    <source>
        <strain>LT2 / SGSC1412 / ATCC 700720</strain>
    </source>
</reference>
<keyword id="KW-1003">Cell membrane</keyword>
<keyword id="KW-0406">Ion transport</keyword>
<keyword id="KW-0472">Membrane</keyword>
<keyword id="KW-1185">Reference proteome</keyword>
<keyword id="KW-0915">Sodium</keyword>
<keyword id="KW-0739">Sodium transport</keyword>
<keyword id="KW-1278">Translocase</keyword>
<keyword id="KW-0812">Transmembrane</keyword>
<keyword id="KW-1133">Transmembrane helix</keyword>
<keyword id="KW-0813">Transport</keyword>
<sequence>MESLNALLQGMGLMHLGAGQAIMLLVSLLLLWLAIAKKFEPLLLLPIGFGGLLSNIPEAGLALTALESLLAHHDAGQLAVIAAKLHCAPDVHAIKEALALALPSVQNQMENLAVDMGYTPGVLALFYKVAIGSGVAPLVIFMGVGAMTDFGPLLANPRTLLLGAAAQFGIFATVLGALTLNYFGLISFTLPQAAAIGIIGGADGPTAIYLSGKLAPELLGAIAVAAYSYMALVPLIQPPIMKALTSETERKIRMVQLRTVSKREKILFPVVLLMLVALLLPDAAPLLGMFCFGNLMRESGVVERLSDTVQNGLINIVTIFLGLSVGAKLVADKFLQPQTLGILLLGVIAFGIGTAAGVLMAKLLNLCSKNKINPLIGSAGVSAVPMAARVSNKVGLESDAQNFLLMHAMGPNVAGVIGSAIAAGVMLKYVLAM</sequence>
<feature type="chain" id="PRO_0000218566" description="Oxaloacetate decarboxylase beta chain 2">
    <location>
        <begin position="1"/>
        <end position="433"/>
    </location>
</feature>
<feature type="transmembrane region" description="Helical" evidence="1">
    <location>
        <begin position="13"/>
        <end position="35"/>
    </location>
</feature>
<feature type="transmembrane region" description="Helical" evidence="1">
    <location>
        <begin position="42"/>
        <end position="64"/>
    </location>
</feature>
<feature type="transmembrane region" description="Helical" evidence="1">
    <location>
        <begin position="125"/>
        <end position="147"/>
    </location>
</feature>
<feature type="transmembrane region" description="Helical" evidence="1">
    <location>
        <begin position="160"/>
        <end position="182"/>
    </location>
</feature>
<feature type="transmembrane region" description="Helical" evidence="1">
    <location>
        <begin position="214"/>
        <end position="236"/>
    </location>
</feature>
<feature type="transmembrane region" description="Helical" evidence="1">
    <location>
        <begin position="266"/>
        <end position="288"/>
    </location>
</feature>
<feature type="transmembrane region" description="Helical" evidence="1">
    <location>
        <begin position="308"/>
        <end position="327"/>
    </location>
</feature>
<feature type="transmembrane region" description="Helical" evidence="1">
    <location>
        <begin position="339"/>
        <end position="361"/>
    </location>
</feature>
<feature type="transmembrane region" description="Helical" evidence="1">
    <location>
        <begin position="413"/>
        <end position="432"/>
    </location>
</feature>
<proteinExistence type="inferred from homology"/>
<gene>
    <name type="primary">oadB2</name>
    <name type="synonym">oadB</name>
    <name type="ordered locus">STM3351</name>
</gene>